<protein>
    <recommendedName>
        <fullName evidence="9">Extracellular serine/threonine protein kinase four-jointed</fullName>
        <ecNumber evidence="9">2.7.11.1</ecNumber>
    </recommendedName>
    <component>
        <recommendedName>
            <fullName>Protein four-jointed, secreted isoform</fullName>
        </recommendedName>
    </component>
</protein>
<proteinExistence type="evidence at protein level"/>
<sequence length="583" mass="65490">MYDIKRLEAGQQKLQQAQQPLGLDLSGQQQQLTCSVITAPEHRANPNPSSISQSNPSEATHMTLLTLRRRRSLQRRACLLSILAAFVFGMALGVVVPMFGLPRHQDSPPDLPEEQIQMVAVEPLSSYRVEFIKETDELSAEQVFRNAFHLEQDKDAPDSMVVKKLDTNDGSIKEFHVQRTASGRYRKGPERRLSKKMPERVQPQETSRSPTTSPTNPTSEHQAGFIEEDVYWGPTVEQALPKGFAAKDQVSWERFVGEQGRVVRLEQGCGRMQNRMVVFADGTRACARYRQNTDQIQGEIFSYYLGQLLNISNLAPSAATVVDTSTPNWAAALGDITQAQWKERRPVVLTRWLSDLEPAGIPQPFQPLERHLNKHDVWNLTRHMQSERQAQSQPHGLLKRLGAASSPGSAHQSNAIEETGTGTETANGALVQRLIELAQWSDLIVFDYLIANLDRVVNNLYNFQWNADIMAAPAHNLARQSASQLLVFLDNESGLLHGYRLLKKYEAYHSLLLDNLCVFRRPTIDALRRLRAAGAGRRLRDLFERTTSAGVRDVLPSLPDKSVKILVERIDRVLGQVQKCQGS</sequence>
<keyword id="KW-0325">Glycoprotein</keyword>
<keyword id="KW-0333">Golgi apparatus</keyword>
<keyword id="KW-0418">Kinase</keyword>
<keyword id="KW-0472">Membrane</keyword>
<keyword id="KW-0914">Notch signaling pathway</keyword>
<keyword id="KW-1185">Reference proteome</keyword>
<keyword id="KW-0964">Secreted</keyword>
<keyword id="KW-0723">Serine/threonine-protein kinase</keyword>
<keyword id="KW-0735">Signal-anchor</keyword>
<keyword id="KW-0808">Transferase</keyword>
<keyword id="KW-0812">Transmembrane</keyword>
<keyword id="KW-1133">Transmembrane helix</keyword>
<keyword id="KW-0879">Wnt signaling pathway</keyword>
<name>FOJO_DROME</name>
<dbReference type="EC" id="2.7.11.1" evidence="9"/>
<dbReference type="EMBL" id="U28837">
    <property type="protein sequence ID" value="AAA69524.1"/>
    <property type="molecule type" value="mRNA"/>
</dbReference>
<dbReference type="EMBL" id="U44904">
    <property type="protein sequence ID" value="AAB01809.1"/>
    <property type="molecule type" value="mRNA"/>
</dbReference>
<dbReference type="EMBL" id="AE013599">
    <property type="protein sequence ID" value="AAF57724.2"/>
    <property type="molecule type" value="Genomic_DNA"/>
</dbReference>
<dbReference type="EMBL" id="AY071147">
    <property type="protein sequence ID" value="AAL48769.1"/>
    <property type="molecule type" value="mRNA"/>
</dbReference>
<dbReference type="RefSeq" id="NP_477483.1">
    <property type="nucleotide sequence ID" value="NM_058135.4"/>
</dbReference>
<dbReference type="BioGRID" id="62770">
    <property type="interactions" value="23"/>
</dbReference>
<dbReference type="FunCoup" id="P54360">
    <property type="interactions" value="100"/>
</dbReference>
<dbReference type="STRING" id="7227.FBpp0085933"/>
<dbReference type="GlyCosmos" id="P54360">
    <property type="glycosylation" value="3 sites, No reported glycans"/>
</dbReference>
<dbReference type="GlyGen" id="P54360">
    <property type="glycosylation" value="4 sites"/>
</dbReference>
<dbReference type="PaxDb" id="7227-FBpp0085933"/>
<dbReference type="DNASU" id="37089"/>
<dbReference type="EnsemblMetazoa" id="FBtr0086754">
    <property type="protein sequence ID" value="FBpp0085933"/>
    <property type="gene ID" value="FBgn0000658"/>
</dbReference>
<dbReference type="GeneID" id="37089"/>
<dbReference type="KEGG" id="dme:Dmel_CG10917"/>
<dbReference type="UCSC" id="CG10917-RA">
    <property type="organism name" value="d. melanogaster"/>
</dbReference>
<dbReference type="AGR" id="FB:FBgn0000658"/>
<dbReference type="CTD" id="37089"/>
<dbReference type="FlyBase" id="FBgn0000658">
    <property type="gene designation" value="fj"/>
</dbReference>
<dbReference type="VEuPathDB" id="VectorBase:FBgn0000658"/>
<dbReference type="eggNOG" id="ENOG502QUJ4">
    <property type="taxonomic scope" value="Eukaryota"/>
</dbReference>
<dbReference type="GeneTree" id="ENSGT00390000016768"/>
<dbReference type="HOGENOM" id="CLU_033850_1_0_1"/>
<dbReference type="InParanoid" id="P54360"/>
<dbReference type="OMA" id="NAFHLEQ"/>
<dbReference type="OrthoDB" id="10055077at2759"/>
<dbReference type="PhylomeDB" id="P54360"/>
<dbReference type="BioGRID-ORCS" id="37089">
    <property type="hits" value="0 hits in 3 CRISPR screens"/>
</dbReference>
<dbReference type="GenomeRNAi" id="37089"/>
<dbReference type="PRO" id="PR:P54360"/>
<dbReference type="Proteomes" id="UP000000803">
    <property type="component" value="Chromosome 2R"/>
</dbReference>
<dbReference type="Bgee" id="FBgn0000658">
    <property type="expression patterns" value="Expressed in wing disc and 81 other cell types or tissues"/>
</dbReference>
<dbReference type="GO" id="GO:0005737">
    <property type="term" value="C:cytoplasm"/>
    <property type="evidence" value="ECO:0007005"/>
    <property type="project" value="FlyBase"/>
</dbReference>
<dbReference type="GO" id="GO:0005615">
    <property type="term" value="C:extracellular space"/>
    <property type="evidence" value="ECO:0000318"/>
    <property type="project" value="GO_Central"/>
</dbReference>
<dbReference type="GO" id="GO:0000139">
    <property type="term" value="C:Golgi membrane"/>
    <property type="evidence" value="ECO:0007669"/>
    <property type="project" value="UniProtKB-SubCell"/>
</dbReference>
<dbReference type="GO" id="GO:0005886">
    <property type="term" value="C:plasma membrane"/>
    <property type="evidence" value="ECO:0000314"/>
    <property type="project" value="FlyBase"/>
</dbReference>
<dbReference type="GO" id="GO:0106310">
    <property type="term" value="F:protein serine kinase activity"/>
    <property type="evidence" value="ECO:0007669"/>
    <property type="project" value="RHEA"/>
</dbReference>
<dbReference type="GO" id="GO:0004674">
    <property type="term" value="F:protein serine/threonine kinase activity"/>
    <property type="evidence" value="ECO:0000314"/>
    <property type="project" value="FlyBase"/>
</dbReference>
<dbReference type="GO" id="GO:0017147">
    <property type="term" value="F:Wnt-protein binding"/>
    <property type="evidence" value="ECO:0000353"/>
    <property type="project" value="FlyBase"/>
</dbReference>
<dbReference type="GO" id="GO:0007267">
    <property type="term" value="P:cell-cell signaling"/>
    <property type="evidence" value="ECO:0000314"/>
    <property type="project" value="FlyBase"/>
</dbReference>
<dbReference type="GO" id="GO:0001737">
    <property type="term" value="P:establishment of imaginal disc-derived wing hair orientation"/>
    <property type="evidence" value="ECO:0000315"/>
    <property type="project" value="FlyBase"/>
</dbReference>
<dbReference type="GO" id="GO:0042067">
    <property type="term" value="P:establishment of ommatidial planar polarity"/>
    <property type="evidence" value="ECO:0000315"/>
    <property type="project" value="UniProtKB"/>
</dbReference>
<dbReference type="GO" id="GO:0001736">
    <property type="term" value="P:establishment of planar polarity"/>
    <property type="evidence" value="ECO:0000315"/>
    <property type="project" value="FlyBase"/>
</dbReference>
<dbReference type="GO" id="GO:0007446">
    <property type="term" value="P:imaginal disc growth"/>
    <property type="evidence" value="ECO:0000315"/>
    <property type="project" value="FlyBase"/>
</dbReference>
<dbReference type="GO" id="GO:0016348">
    <property type="term" value="P:imaginal disc-derived leg joint morphogenesis"/>
    <property type="evidence" value="ECO:0000315"/>
    <property type="project" value="FlyBase"/>
</dbReference>
<dbReference type="GO" id="GO:0007474">
    <property type="term" value="P:imaginal disc-derived wing vein specification"/>
    <property type="evidence" value="ECO:0000315"/>
    <property type="project" value="FlyBase"/>
</dbReference>
<dbReference type="GO" id="GO:0007219">
    <property type="term" value="P:Notch signaling pathway"/>
    <property type="evidence" value="ECO:0007669"/>
    <property type="project" value="UniProtKB-KW"/>
</dbReference>
<dbReference type="GO" id="GO:0006468">
    <property type="term" value="P:protein phosphorylation"/>
    <property type="evidence" value="ECO:0000314"/>
    <property type="project" value="UniProtKB"/>
</dbReference>
<dbReference type="GO" id="GO:0090175">
    <property type="term" value="P:regulation of establishment of planar polarity"/>
    <property type="evidence" value="ECO:0000315"/>
    <property type="project" value="FlyBase"/>
</dbReference>
<dbReference type="GO" id="GO:0043393">
    <property type="term" value="P:regulation of protein binding"/>
    <property type="evidence" value="ECO:0000314"/>
    <property type="project" value="UniProtKB"/>
</dbReference>
<dbReference type="GO" id="GO:0035159">
    <property type="term" value="P:regulation of tube length, open tracheal system"/>
    <property type="evidence" value="ECO:0000315"/>
    <property type="project" value="FlyBase"/>
</dbReference>
<dbReference type="GO" id="GO:0016055">
    <property type="term" value="P:Wnt signaling pathway"/>
    <property type="evidence" value="ECO:0007669"/>
    <property type="project" value="UniProtKB-KW"/>
</dbReference>
<dbReference type="CDD" id="cd10468">
    <property type="entry name" value="Four-jointed-like_C"/>
    <property type="match status" value="1"/>
</dbReference>
<dbReference type="InterPro" id="IPR024868">
    <property type="entry name" value="FJX1/FJ"/>
</dbReference>
<dbReference type="PANTHER" id="PTHR13147">
    <property type="entry name" value="FOUR-JOINTED BOX PROTEIN 1"/>
    <property type="match status" value="1"/>
</dbReference>
<dbReference type="PANTHER" id="PTHR13147:SF5">
    <property type="entry name" value="FOUR-JOINTED BOX PROTEIN 1"/>
    <property type="match status" value="1"/>
</dbReference>
<dbReference type="PRINTS" id="PR02072">
    <property type="entry name" value="4JOINTEDBOX1"/>
</dbReference>
<reference key="1">
    <citation type="journal article" date="1995" name="Development">
        <title>four-jointed is required for intermediate growth in the proximal-distal axis in Drosophila.</title>
        <authorList>
            <person name="Villano J.L."/>
            <person name="Katz F.N."/>
        </authorList>
    </citation>
    <scope>NUCLEOTIDE SEQUENCE [MRNA]</scope>
    <scope>FUNCTION</scope>
    <scope>TISSUE SPECIFICITY</scope>
    <scope>DISRUPTION PHENOTYPE</scope>
    <source>
        <tissue>Eye imaginal disk</tissue>
    </source>
</reference>
<reference key="2">
    <citation type="journal article" date="1996" name="Dev. Biol.">
        <title>Positional information along the dorsal-ventral axis of the Drosophila eye: graded expression of the four-jointed gene.</title>
        <authorList>
            <person name="Brodsky M.H."/>
            <person name="Steller H."/>
        </authorList>
    </citation>
    <scope>NUCLEOTIDE SEQUENCE [MRNA]</scope>
    <scope>FUNCTION</scope>
    <scope>TISSUE SPECIFICITY</scope>
    <source>
        <strain>Canton-S</strain>
    </source>
</reference>
<reference key="3">
    <citation type="journal article" date="2000" name="Science">
        <title>The genome sequence of Drosophila melanogaster.</title>
        <authorList>
            <person name="Adams M.D."/>
            <person name="Celniker S.E."/>
            <person name="Holt R.A."/>
            <person name="Evans C.A."/>
            <person name="Gocayne J.D."/>
            <person name="Amanatides P.G."/>
            <person name="Scherer S.E."/>
            <person name="Li P.W."/>
            <person name="Hoskins R.A."/>
            <person name="Galle R.F."/>
            <person name="George R.A."/>
            <person name="Lewis S.E."/>
            <person name="Richards S."/>
            <person name="Ashburner M."/>
            <person name="Henderson S.N."/>
            <person name="Sutton G.G."/>
            <person name="Wortman J.R."/>
            <person name="Yandell M.D."/>
            <person name="Zhang Q."/>
            <person name="Chen L.X."/>
            <person name="Brandon R.C."/>
            <person name="Rogers Y.-H.C."/>
            <person name="Blazej R.G."/>
            <person name="Champe M."/>
            <person name="Pfeiffer B.D."/>
            <person name="Wan K.H."/>
            <person name="Doyle C."/>
            <person name="Baxter E.G."/>
            <person name="Helt G."/>
            <person name="Nelson C.R."/>
            <person name="Miklos G.L.G."/>
            <person name="Abril J.F."/>
            <person name="Agbayani A."/>
            <person name="An H.-J."/>
            <person name="Andrews-Pfannkoch C."/>
            <person name="Baldwin D."/>
            <person name="Ballew R.M."/>
            <person name="Basu A."/>
            <person name="Baxendale J."/>
            <person name="Bayraktaroglu L."/>
            <person name="Beasley E.M."/>
            <person name="Beeson K.Y."/>
            <person name="Benos P.V."/>
            <person name="Berman B.P."/>
            <person name="Bhandari D."/>
            <person name="Bolshakov S."/>
            <person name="Borkova D."/>
            <person name="Botchan M.R."/>
            <person name="Bouck J."/>
            <person name="Brokstein P."/>
            <person name="Brottier P."/>
            <person name="Burtis K.C."/>
            <person name="Busam D.A."/>
            <person name="Butler H."/>
            <person name="Cadieu E."/>
            <person name="Center A."/>
            <person name="Chandra I."/>
            <person name="Cherry J.M."/>
            <person name="Cawley S."/>
            <person name="Dahlke C."/>
            <person name="Davenport L.B."/>
            <person name="Davies P."/>
            <person name="de Pablos B."/>
            <person name="Delcher A."/>
            <person name="Deng Z."/>
            <person name="Mays A.D."/>
            <person name="Dew I."/>
            <person name="Dietz S.M."/>
            <person name="Dodson K."/>
            <person name="Doup L.E."/>
            <person name="Downes M."/>
            <person name="Dugan-Rocha S."/>
            <person name="Dunkov B.C."/>
            <person name="Dunn P."/>
            <person name="Durbin K.J."/>
            <person name="Evangelista C.C."/>
            <person name="Ferraz C."/>
            <person name="Ferriera S."/>
            <person name="Fleischmann W."/>
            <person name="Fosler C."/>
            <person name="Gabrielian A.E."/>
            <person name="Garg N.S."/>
            <person name="Gelbart W.M."/>
            <person name="Glasser K."/>
            <person name="Glodek A."/>
            <person name="Gong F."/>
            <person name="Gorrell J.H."/>
            <person name="Gu Z."/>
            <person name="Guan P."/>
            <person name="Harris M."/>
            <person name="Harris N.L."/>
            <person name="Harvey D.A."/>
            <person name="Heiman T.J."/>
            <person name="Hernandez J.R."/>
            <person name="Houck J."/>
            <person name="Hostin D."/>
            <person name="Houston K.A."/>
            <person name="Howland T.J."/>
            <person name="Wei M.-H."/>
            <person name="Ibegwam C."/>
            <person name="Jalali M."/>
            <person name="Kalush F."/>
            <person name="Karpen G.H."/>
            <person name="Ke Z."/>
            <person name="Kennison J.A."/>
            <person name="Ketchum K.A."/>
            <person name="Kimmel B.E."/>
            <person name="Kodira C.D."/>
            <person name="Kraft C.L."/>
            <person name="Kravitz S."/>
            <person name="Kulp D."/>
            <person name="Lai Z."/>
            <person name="Lasko P."/>
            <person name="Lei Y."/>
            <person name="Levitsky A.A."/>
            <person name="Li J.H."/>
            <person name="Li Z."/>
            <person name="Liang Y."/>
            <person name="Lin X."/>
            <person name="Liu X."/>
            <person name="Mattei B."/>
            <person name="McIntosh T.C."/>
            <person name="McLeod M.P."/>
            <person name="McPherson D."/>
            <person name="Merkulov G."/>
            <person name="Milshina N.V."/>
            <person name="Mobarry C."/>
            <person name="Morris J."/>
            <person name="Moshrefi A."/>
            <person name="Mount S.M."/>
            <person name="Moy M."/>
            <person name="Murphy B."/>
            <person name="Murphy L."/>
            <person name="Muzny D.M."/>
            <person name="Nelson D.L."/>
            <person name="Nelson D.R."/>
            <person name="Nelson K.A."/>
            <person name="Nixon K."/>
            <person name="Nusskern D.R."/>
            <person name="Pacleb J.M."/>
            <person name="Palazzolo M."/>
            <person name="Pittman G.S."/>
            <person name="Pan S."/>
            <person name="Pollard J."/>
            <person name="Puri V."/>
            <person name="Reese M.G."/>
            <person name="Reinert K."/>
            <person name="Remington K."/>
            <person name="Saunders R.D.C."/>
            <person name="Scheeler F."/>
            <person name="Shen H."/>
            <person name="Shue B.C."/>
            <person name="Siden-Kiamos I."/>
            <person name="Simpson M."/>
            <person name="Skupski M.P."/>
            <person name="Smith T.J."/>
            <person name="Spier E."/>
            <person name="Spradling A.C."/>
            <person name="Stapleton M."/>
            <person name="Strong R."/>
            <person name="Sun E."/>
            <person name="Svirskas R."/>
            <person name="Tector C."/>
            <person name="Turner R."/>
            <person name="Venter E."/>
            <person name="Wang A.H."/>
            <person name="Wang X."/>
            <person name="Wang Z.-Y."/>
            <person name="Wassarman D.A."/>
            <person name="Weinstock G.M."/>
            <person name="Weissenbach J."/>
            <person name="Williams S.M."/>
            <person name="Woodage T."/>
            <person name="Worley K.C."/>
            <person name="Wu D."/>
            <person name="Yang S."/>
            <person name="Yao Q.A."/>
            <person name="Ye J."/>
            <person name="Yeh R.-F."/>
            <person name="Zaveri J.S."/>
            <person name="Zhan M."/>
            <person name="Zhang G."/>
            <person name="Zhao Q."/>
            <person name="Zheng L."/>
            <person name="Zheng X.H."/>
            <person name="Zhong F.N."/>
            <person name="Zhong W."/>
            <person name="Zhou X."/>
            <person name="Zhu S.C."/>
            <person name="Zhu X."/>
            <person name="Smith H.O."/>
            <person name="Gibbs R.A."/>
            <person name="Myers E.W."/>
            <person name="Rubin G.M."/>
            <person name="Venter J.C."/>
        </authorList>
    </citation>
    <scope>NUCLEOTIDE SEQUENCE [LARGE SCALE GENOMIC DNA]</scope>
    <source>
        <strain>Berkeley</strain>
    </source>
</reference>
<reference key="4">
    <citation type="journal article" date="2002" name="Genome Biol.">
        <title>Annotation of the Drosophila melanogaster euchromatic genome: a systematic review.</title>
        <authorList>
            <person name="Misra S."/>
            <person name="Crosby M.A."/>
            <person name="Mungall C.J."/>
            <person name="Matthews B.B."/>
            <person name="Campbell K.S."/>
            <person name="Hradecky P."/>
            <person name="Huang Y."/>
            <person name="Kaminker J.S."/>
            <person name="Millburn G.H."/>
            <person name="Prochnik S.E."/>
            <person name="Smith C.D."/>
            <person name="Tupy J.L."/>
            <person name="Whitfield E.J."/>
            <person name="Bayraktaroglu L."/>
            <person name="Berman B.P."/>
            <person name="Bettencourt B.R."/>
            <person name="Celniker S.E."/>
            <person name="de Grey A.D.N.J."/>
            <person name="Drysdale R.A."/>
            <person name="Harris N.L."/>
            <person name="Richter J."/>
            <person name="Russo S."/>
            <person name="Schroeder A.J."/>
            <person name="Shu S.Q."/>
            <person name="Stapleton M."/>
            <person name="Yamada C."/>
            <person name="Ashburner M."/>
            <person name="Gelbart W.M."/>
            <person name="Rubin G.M."/>
            <person name="Lewis S.E."/>
        </authorList>
    </citation>
    <scope>GENOME REANNOTATION</scope>
    <source>
        <strain>Berkeley</strain>
    </source>
</reference>
<reference key="5">
    <citation type="journal article" date="2002" name="Genome Biol.">
        <title>A Drosophila full-length cDNA resource.</title>
        <authorList>
            <person name="Stapleton M."/>
            <person name="Carlson J.W."/>
            <person name="Brokstein P."/>
            <person name="Yu C."/>
            <person name="Champe M."/>
            <person name="George R.A."/>
            <person name="Guarin H."/>
            <person name="Kronmiller B."/>
            <person name="Pacleb J.M."/>
            <person name="Park S."/>
            <person name="Wan K.H."/>
            <person name="Rubin G.M."/>
            <person name="Celniker S.E."/>
        </authorList>
    </citation>
    <scope>NUCLEOTIDE SEQUENCE [LARGE SCALE MRNA]</scope>
    <source>
        <strain>Berkeley</strain>
        <tissue>Embryo</tissue>
    </source>
</reference>
<reference key="6">
    <citation type="journal article" date="1999" name="Curr. Biol.">
        <title>The four-jointed gene is required in the Drosophila eye for ommatidial polarity specification.</title>
        <authorList>
            <person name="Zeidler M.P."/>
            <person name="Perrimon N."/>
            <person name="Strutt D.I."/>
        </authorList>
    </citation>
    <scope>FUNCTION</scope>
    <scope>TISSUE SPECIFICITY</scope>
</reference>
<reference key="7">
    <citation type="journal article" date="2001" name="Development">
        <title>Four-jointed interacts with dachs, abelson and enabled and feeds back onto the Notch pathway to affect growth and segmentation in the Drosophila leg.</title>
        <authorList>
            <person name="Buckles G.R."/>
            <person name="Rauskolb C."/>
            <person name="Villano J.L."/>
            <person name="Katz F.N."/>
        </authorList>
    </citation>
    <scope>FUNCTION</scope>
    <scope>SUBCELLULAR LOCATION</scope>
    <scope>TISSUE SPECIFICITY</scope>
</reference>
<reference key="8">
    <citation type="journal article" date="2004" name="Development">
        <title>Cleavage and secretion is not required for four-jointed function in Drosophila patterning.</title>
        <authorList>
            <person name="Strutt H."/>
            <person name="Mundy J."/>
            <person name="Hofstra K."/>
            <person name="Strutt D."/>
        </authorList>
    </citation>
    <scope>FUNCTION</scope>
    <scope>PROTEOLYTIC CLEAVAGE</scope>
    <scope>SUBCELLULAR LOCATION</scope>
    <scope>TISSUE SPECIFICITY</scope>
</reference>
<reference key="9">
    <citation type="journal article" date="2008" name="Science">
        <title>Four-jointed is a Golgi kinase that phosphorylates a subset of cadherin domains.</title>
        <authorList>
            <person name="Ishikawa H.O."/>
            <person name="Takeuchi H."/>
            <person name="Haltiwanger R.S."/>
            <person name="Irvine K.D."/>
        </authorList>
    </citation>
    <scope>FUNCTION</scope>
    <scope>MUTAGENESIS OF 490-ASP--GLU-492</scope>
</reference>
<feature type="chain" id="PRO_0000087324" description="Extracellular serine/threonine protein kinase four-jointed">
    <location>
        <begin position="1"/>
        <end position="583"/>
    </location>
</feature>
<feature type="chain" id="PRO_0000292347" description="Protein four-jointed, secreted isoform">
    <location>
        <begin status="unknown"/>
        <end position="583"/>
    </location>
</feature>
<feature type="topological domain" description="Cytoplasmic" evidence="1">
    <location>
        <begin position="1"/>
        <end position="78"/>
    </location>
</feature>
<feature type="transmembrane region" description="Helical; Signal-anchor for type II membrane protein" evidence="1">
    <location>
        <begin position="79"/>
        <end position="99"/>
    </location>
</feature>
<feature type="topological domain" description="Extracellular" evidence="1">
    <location>
        <begin position="100"/>
        <end position="583"/>
    </location>
</feature>
<feature type="region of interest" description="Disordered" evidence="2">
    <location>
        <begin position="179"/>
        <end position="222"/>
    </location>
</feature>
<feature type="region of interest" description="Disordered" evidence="2">
    <location>
        <begin position="384"/>
        <end position="421"/>
    </location>
</feature>
<feature type="compositionally biased region" description="Basic and acidic residues" evidence="2">
    <location>
        <begin position="187"/>
        <end position="199"/>
    </location>
</feature>
<feature type="compositionally biased region" description="Low complexity" evidence="2">
    <location>
        <begin position="206"/>
        <end position="219"/>
    </location>
</feature>
<feature type="glycosylation site" description="N-linked (GlcNAc...) asparagine" evidence="1">
    <location>
        <position position="310"/>
    </location>
</feature>
<feature type="glycosylation site" description="N-linked (GlcNAc...) asparagine" evidence="1">
    <location>
        <position position="379"/>
    </location>
</feature>
<feature type="glycosylation site" description="N-linked (GlcNAc...) asparagine" evidence="1">
    <location>
        <position position="491"/>
    </location>
</feature>
<feature type="mutagenesis site" description="Abolishes the protein kinase activity." evidence="6">
    <original>DNE</original>
    <variation>GGG</variation>
    <location>
        <begin position="490"/>
        <end position="492"/>
    </location>
</feature>
<feature type="sequence conflict" description="In Ref. 1; AAA69524 and 2; AAB01809." evidence="9" ref="1 2">
    <original>P</original>
    <variation>S</variation>
    <location>
        <position position="48"/>
    </location>
</feature>
<feature type="sequence conflict" description="In Ref. 1; AAA69524." evidence="9" ref="1">
    <original>S</original>
    <variation>T</variation>
    <location>
        <position position="126"/>
    </location>
</feature>
<feature type="sequence conflict" description="In Ref. 1; AAA69524." evidence="9" ref="1">
    <original>L</original>
    <variation>M</variation>
    <location>
        <position position="193"/>
    </location>
</feature>
<feature type="sequence conflict" description="In Ref. 1; AAA69524 and 2; AAB01809." evidence="9" ref="1 2">
    <original>F</original>
    <variation>L</variation>
    <location>
        <position position="225"/>
    </location>
</feature>
<feature type="sequence conflict" description="In Ref. 1; AAA69524." evidence="9" ref="1">
    <original>R</original>
    <variation>P</variation>
    <location>
        <position position="288"/>
    </location>
</feature>
<feature type="sequence conflict" description="In Ref. 1; AAA69524." evidence="9" ref="1">
    <original>A</original>
    <variation>R</variation>
    <location>
        <position position="330"/>
    </location>
</feature>
<gene>
    <name evidence="10" type="primary">fj</name>
    <name type="ORF">CG10917</name>
</gene>
<accession>P54360</accession>
<accession>Q24176</accession>
<accession>Q8SZ37</accession>
<accession>Q9V8E3</accession>
<organism>
    <name type="scientific">Drosophila melanogaster</name>
    <name type="common">Fruit fly</name>
    <dbReference type="NCBI Taxonomy" id="7227"/>
    <lineage>
        <taxon>Eukaryota</taxon>
        <taxon>Metazoa</taxon>
        <taxon>Ecdysozoa</taxon>
        <taxon>Arthropoda</taxon>
        <taxon>Hexapoda</taxon>
        <taxon>Insecta</taxon>
        <taxon>Pterygota</taxon>
        <taxon>Neoptera</taxon>
        <taxon>Endopterygota</taxon>
        <taxon>Diptera</taxon>
        <taxon>Brachycera</taxon>
        <taxon>Muscomorpha</taxon>
        <taxon>Ephydroidea</taxon>
        <taxon>Drosophilidae</taxon>
        <taxon>Drosophila</taxon>
        <taxon>Sophophora</taxon>
    </lineage>
</organism>
<comment type="function">
    <text evidence="3 4 5 6 7 8">Golgi serine/threonine protein kinase required for intermediate growth in the proximal-distal axis. Phosphorylates specific residues within extracellular cadherin domains of Fat (ft) and Dachsous (ds) as they transit through the Golgi (PubMed:18635802). Acts in ommatidial polarity determination as a secondary signal downstream of Notch, JAK/STAT and wingless. Also necessary for the initiation, up-regulation or maintenance of Notch ligand, Serrate (Ser) expression in legs, thereby participating in a feedback loop with N signaling. Sufficient for joint formation and growth in the leg (PubMed:10607560, PubMed:11566858, PubMed:14757640, PubMed:7555705, PubMed:8606003).</text>
</comment>
<comment type="catalytic activity">
    <reaction evidence="9">
        <text>L-seryl-[protein] + ATP = O-phospho-L-seryl-[protein] + ADP + H(+)</text>
        <dbReference type="Rhea" id="RHEA:17989"/>
        <dbReference type="Rhea" id="RHEA-COMP:9863"/>
        <dbReference type="Rhea" id="RHEA-COMP:11604"/>
        <dbReference type="ChEBI" id="CHEBI:15378"/>
        <dbReference type="ChEBI" id="CHEBI:29999"/>
        <dbReference type="ChEBI" id="CHEBI:30616"/>
        <dbReference type="ChEBI" id="CHEBI:83421"/>
        <dbReference type="ChEBI" id="CHEBI:456216"/>
        <dbReference type="EC" id="2.7.11.1"/>
    </reaction>
</comment>
<comment type="catalytic activity">
    <reaction evidence="9">
        <text>L-threonyl-[protein] + ATP = O-phospho-L-threonyl-[protein] + ADP + H(+)</text>
        <dbReference type="Rhea" id="RHEA:46608"/>
        <dbReference type="Rhea" id="RHEA-COMP:11060"/>
        <dbReference type="Rhea" id="RHEA-COMP:11605"/>
        <dbReference type="ChEBI" id="CHEBI:15378"/>
        <dbReference type="ChEBI" id="CHEBI:30013"/>
        <dbReference type="ChEBI" id="CHEBI:30616"/>
        <dbReference type="ChEBI" id="CHEBI:61977"/>
        <dbReference type="ChEBI" id="CHEBI:456216"/>
        <dbReference type="EC" id="2.7.11.1"/>
    </reaction>
</comment>
<comment type="subcellular location">
    <subcellularLocation>
        <location evidence="4 5">Golgi apparatus membrane</location>
        <topology evidence="4 5">Single-pass type II membrane protein</topology>
    </subcellularLocation>
    <text>Golgi apparatus, in the wing pouch.</text>
</comment>
<comment type="subcellular location">
    <molecule>Protein four-jointed, secreted isoform</molecule>
    <subcellularLocation>
        <location evidence="9">Secreted</location>
    </subcellularLocation>
</comment>
<comment type="tissue specificity">
    <text evidence="3 4 5 7 8">In the eye disk, expressed in a gradient ahead of the morphogenetic furrow, high at the equator and low at the poles of the eye. In the leg disk, expressed in concentric rings, possibly corresponding to segmental boundaries. In the wing disk, expression is localized in the wing pouch; low in peripheral regions and high towards the center.</text>
</comment>
<comment type="PTM">
    <text evidence="5">Proteolytically cleaved to yield a secreted protein.</text>
</comment>
<comment type="disruption phenotype">
    <text evidence="7">Mutants show reduced growth and altered differentiation only within restricted sectors of the proximal-distal (PD) axis in the leg and wing.</text>
</comment>
<comment type="similarity">
    <text evidence="9">Belongs to the FJX1/FJ family.</text>
</comment>
<evidence type="ECO:0000255" key="1"/>
<evidence type="ECO:0000256" key="2">
    <source>
        <dbReference type="SAM" id="MobiDB-lite"/>
    </source>
</evidence>
<evidence type="ECO:0000269" key="3">
    <source>
    </source>
</evidence>
<evidence type="ECO:0000269" key="4">
    <source>
    </source>
</evidence>
<evidence type="ECO:0000269" key="5">
    <source>
    </source>
</evidence>
<evidence type="ECO:0000269" key="6">
    <source>
    </source>
</evidence>
<evidence type="ECO:0000269" key="7">
    <source>
    </source>
</evidence>
<evidence type="ECO:0000269" key="8">
    <source>
    </source>
</evidence>
<evidence type="ECO:0000305" key="9"/>
<evidence type="ECO:0000312" key="10">
    <source>
        <dbReference type="FlyBase" id="FBgn0000658"/>
    </source>
</evidence>